<gene>
    <name evidence="1" type="primary">rpsG</name>
    <name type="ordered locus">Lcho_3862</name>
</gene>
<organism>
    <name type="scientific">Leptothrix cholodnii (strain ATCC 51168 / LMG 8142 / SP-6)</name>
    <name type="common">Leptothrix discophora (strain SP-6)</name>
    <dbReference type="NCBI Taxonomy" id="395495"/>
    <lineage>
        <taxon>Bacteria</taxon>
        <taxon>Pseudomonadati</taxon>
        <taxon>Pseudomonadota</taxon>
        <taxon>Betaproteobacteria</taxon>
        <taxon>Burkholderiales</taxon>
        <taxon>Sphaerotilaceae</taxon>
        <taxon>Leptothrix</taxon>
    </lineage>
</organism>
<accession>B1Y7G8</accession>
<comment type="function">
    <text evidence="1">One of the primary rRNA binding proteins, it binds directly to 16S rRNA where it nucleates assembly of the head domain of the 30S subunit. Is located at the subunit interface close to the decoding center, probably blocks exit of the E-site tRNA.</text>
</comment>
<comment type="subunit">
    <text evidence="1">Part of the 30S ribosomal subunit. Contacts proteins S9 and S11.</text>
</comment>
<comment type="similarity">
    <text evidence="1">Belongs to the universal ribosomal protein uS7 family.</text>
</comment>
<evidence type="ECO:0000255" key="1">
    <source>
        <dbReference type="HAMAP-Rule" id="MF_00480"/>
    </source>
</evidence>
<evidence type="ECO:0000305" key="2"/>
<reference key="1">
    <citation type="submission" date="2008-03" db="EMBL/GenBank/DDBJ databases">
        <title>Complete sequence of Leptothrix cholodnii SP-6.</title>
        <authorList>
            <consortium name="US DOE Joint Genome Institute"/>
            <person name="Copeland A."/>
            <person name="Lucas S."/>
            <person name="Lapidus A."/>
            <person name="Glavina del Rio T."/>
            <person name="Dalin E."/>
            <person name="Tice H."/>
            <person name="Bruce D."/>
            <person name="Goodwin L."/>
            <person name="Pitluck S."/>
            <person name="Chertkov O."/>
            <person name="Brettin T."/>
            <person name="Detter J.C."/>
            <person name="Han C."/>
            <person name="Kuske C.R."/>
            <person name="Schmutz J."/>
            <person name="Larimer F."/>
            <person name="Land M."/>
            <person name="Hauser L."/>
            <person name="Kyrpides N."/>
            <person name="Lykidis A."/>
            <person name="Emerson D."/>
            <person name="Richardson P."/>
        </authorList>
    </citation>
    <scope>NUCLEOTIDE SEQUENCE [LARGE SCALE GENOMIC DNA]</scope>
    <source>
        <strain>ATCC 51168 / LMG 8142 / SP-6</strain>
    </source>
</reference>
<keyword id="KW-1185">Reference proteome</keyword>
<keyword id="KW-0687">Ribonucleoprotein</keyword>
<keyword id="KW-0689">Ribosomal protein</keyword>
<keyword id="KW-0694">RNA-binding</keyword>
<keyword id="KW-0699">rRNA-binding</keyword>
<keyword id="KW-0820">tRNA-binding</keyword>
<proteinExistence type="inferred from homology"/>
<feature type="chain" id="PRO_1000125964" description="Small ribosomal subunit protein uS7">
    <location>
        <begin position="1"/>
        <end position="156"/>
    </location>
</feature>
<name>RS7_LEPCP</name>
<protein>
    <recommendedName>
        <fullName evidence="1">Small ribosomal subunit protein uS7</fullName>
    </recommendedName>
    <alternativeName>
        <fullName evidence="2">30S ribosomal protein S7</fullName>
    </alternativeName>
</protein>
<sequence length="156" mass="17903">MPRRREVPKREILPDPKFGSVDLSKFMNVIMESGKKAVAERIIYGALEQVEKKAGKDPMEIFLTALNNVKPMVEVKSRRVGGANYQVPVEVRPIRRMALAMRWLKESARKRSEKSMAQRLANELMEACEGRGGAMKKRDEVHRMAEANKAFSHFRF</sequence>
<dbReference type="EMBL" id="CP001013">
    <property type="protein sequence ID" value="ACB36116.1"/>
    <property type="molecule type" value="Genomic_DNA"/>
</dbReference>
<dbReference type="RefSeq" id="WP_012348863.1">
    <property type="nucleotide sequence ID" value="NC_010524.1"/>
</dbReference>
<dbReference type="SMR" id="B1Y7G8"/>
<dbReference type="STRING" id="395495.Lcho_3862"/>
<dbReference type="KEGG" id="lch:Lcho_3862"/>
<dbReference type="eggNOG" id="COG0049">
    <property type="taxonomic scope" value="Bacteria"/>
</dbReference>
<dbReference type="HOGENOM" id="CLU_072226_1_1_4"/>
<dbReference type="OrthoDB" id="9807653at2"/>
<dbReference type="Proteomes" id="UP000001693">
    <property type="component" value="Chromosome"/>
</dbReference>
<dbReference type="GO" id="GO:0015935">
    <property type="term" value="C:small ribosomal subunit"/>
    <property type="evidence" value="ECO:0007669"/>
    <property type="project" value="InterPro"/>
</dbReference>
<dbReference type="GO" id="GO:0019843">
    <property type="term" value="F:rRNA binding"/>
    <property type="evidence" value="ECO:0007669"/>
    <property type="project" value="UniProtKB-UniRule"/>
</dbReference>
<dbReference type="GO" id="GO:0003735">
    <property type="term" value="F:structural constituent of ribosome"/>
    <property type="evidence" value="ECO:0007669"/>
    <property type="project" value="InterPro"/>
</dbReference>
<dbReference type="GO" id="GO:0000049">
    <property type="term" value="F:tRNA binding"/>
    <property type="evidence" value="ECO:0007669"/>
    <property type="project" value="UniProtKB-UniRule"/>
</dbReference>
<dbReference type="GO" id="GO:0006412">
    <property type="term" value="P:translation"/>
    <property type="evidence" value="ECO:0007669"/>
    <property type="project" value="UniProtKB-UniRule"/>
</dbReference>
<dbReference type="CDD" id="cd14869">
    <property type="entry name" value="uS7_Bacteria"/>
    <property type="match status" value="1"/>
</dbReference>
<dbReference type="FunFam" id="1.10.455.10:FF:000001">
    <property type="entry name" value="30S ribosomal protein S7"/>
    <property type="match status" value="1"/>
</dbReference>
<dbReference type="Gene3D" id="1.10.455.10">
    <property type="entry name" value="Ribosomal protein S7 domain"/>
    <property type="match status" value="1"/>
</dbReference>
<dbReference type="HAMAP" id="MF_00480_B">
    <property type="entry name" value="Ribosomal_uS7_B"/>
    <property type="match status" value="1"/>
</dbReference>
<dbReference type="InterPro" id="IPR000235">
    <property type="entry name" value="Ribosomal_uS7"/>
</dbReference>
<dbReference type="InterPro" id="IPR005717">
    <property type="entry name" value="Ribosomal_uS7_bac/org-type"/>
</dbReference>
<dbReference type="InterPro" id="IPR020606">
    <property type="entry name" value="Ribosomal_uS7_CS"/>
</dbReference>
<dbReference type="InterPro" id="IPR023798">
    <property type="entry name" value="Ribosomal_uS7_dom"/>
</dbReference>
<dbReference type="InterPro" id="IPR036823">
    <property type="entry name" value="Ribosomal_uS7_dom_sf"/>
</dbReference>
<dbReference type="NCBIfam" id="TIGR01029">
    <property type="entry name" value="rpsG_bact"/>
    <property type="match status" value="1"/>
</dbReference>
<dbReference type="PANTHER" id="PTHR11205">
    <property type="entry name" value="RIBOSOMAL PROTEIN S7"/>
    <property type="match status" value="1"/>
</dbReference>
<dbReference type="Pfam" id="PF00177">
    <property type="entry name" value="Ribosomal_S7"/>
    <property type="match status" value="1"/>
</dbReference>
<dbReference type="PIRSF" id="PIRSF002122">
    <property type="entry name" value="RPS7p_RPS7a_RPS5e_RPS7o"/>
    <property type="match status" value="1"/>
</dbReference>
<dbReference type="SUPFAM" id="SSF47973">
    <property type="entry name" value="Ribosomal protein S7"/>
    <property type="match status" value="1"/>
</dbReference>
<dbReference type="PROSITE" id="PS00052">
    <property type="entry name" value="RIBOSOMAL_S7"/>
    <property type="match status" value="1"/>
</dbReference>